<protein>
    <recommendedName>
        <fullName>ATP-dependent RNA helicase DBP7</fullName>
        <ecNumber>3.6.4.13</ecNumber>
    </recommendedName>
</protein>
<accession>Q1E9T9</accession>
<accession>J3KHL5</accession>
<organism>
    <name type="scientific">Coccidioides immitis (strain RS)</name>
    <name type="common">Valley fever fungus</name>
    <dbReference type="NCBI Taxonomy" id="246410"/>
    <lineage>
        <taxon>Eukaryota</taxon>
        <taxon>Fungi</taxon>
        <taxon>Dikarya</taxon>
        <taxon>Ascomycota</taxon>
        <taxon>Pezizomycotina</taxon>
        <taxon>Eurotiomycetes</taxon>
        <taxon>Eurotiomycetidae</taxon>
        <taxon>Onygenales</taxon>
        <taxon>Onygenaceae</taxon>
        <taxon>Coccidioides</taxon>
    </lineage>
</organism>
<gene>
    <name type="primary">DBP7</name>
    <name type="ORF">CIMG_00674</name>
</gene>
<keyword id="KW-0067">ATP-binding</keyword>
<keyword id="KW-0347">Helicase</keyword>
<keyword id="KW-0378">Hydrolase</keyword>
<keyword id="KW-0547">Nucleotide-binding</keyword>
<keyword id="KW-0539">Nucleus</keyword>
<keyword id="KW-1185">Reference proteome</keyword>
<keyword id="KW-0690">Ribosome biogenesis</keyword>
<keyword id="KW-0694">RNA-binding</keyword>
<keyword id="KW-0698">rRNA processing</keyword>
<evidence type="ECO:0000250" key="1"/>
<evidence type="ECO:0000255" key="2">
    <source>
        <dbReference type="PROSITE-ProRule" id="PRU00541"/>
    </source>
</evidence>
<evidence type="ECO:0000255" key="3">
    <source>
        <dbReference type="PROSITE-ProRule" id="PRU00542"/>
    </source>
</evidence>
<evidence type="ECO:0000256" key="4">
    <source>
        <dbReference type="SAM" id="MobiDB-lite"/>
    </source>
</evidence>
<evidence type="ECO:0000305" key="5"/>
<comment type="function">
    <text evidence="1">ATP-binding RNA helicase involved in the biogenesis of 60S ribosomal subunits and is required for the normal formation of 25S and 5.8S rRNAs.</text>
</comment>
<comment type="catalytic activity">
    <reaction>
        <text>ATP + H2O = ADP + phosphate + H(+)</text>
        <dbReference type="Rhea" id="RHEA:13065"/>
        <dbReference type="ChEBI" id="CHEBI:15377"/>
        <dbReference type="ChEBI" id="CHEBI:15378"/>
        <dbReference type="ChEBI" id="CHEBI:30616"/>
        <dbReference type="ChEBI" id="CHEBI:43474"/>
        <dbReference type="ChEBI" id="CHEBI:456216"/>
        <dbReference type="EC" id="3.6.4.13"/>
    </reaction>
</comment>
<comment type="subcellular location">
    <subcellularLocation>
        <location evidence="1">Nucleus</location>
        <location evidence="1">Nucleolus</location>
    </subcellularLocation>
</comment>
<comment type="domain">
    <text>The Q motif is unique to and characteristic of the DEAD box family of RNA helicases and controls ATP binding and hydrolysis.</text>
</comment>
<comment type="similarity">
    <text evidence="5">Belongs to the DEAD box helicase family. DDX31/DBP7 subfamily.</text>
</comment>
<dbReference type="EC" id="3.6.4.13"/>
<dbReference type="EMBL" id="GG704911">
    <property type="protein sequence ID" value="EAS35320.3"/>
    <property type="molecule type" value="Genomic_DNA"/>
</dbReference>
<dbReference type="RefSeq" id="XP_001246903.1">
    <property type="nucleotide sequence ID" value="XM_001246902.2"/>
</dbReference>
<dbReference type="SMR" id="Q1E9T9"/>
<dbReference type="FunCoup" id="Q1E9T9">
    <property type="interactions" value="736"/>
</dbReference>
<dbReference type="STRING" id="246410.Q1E9T9"/>
<dbReference type="GeneID" id="4565651"/>
<dbReference type="KEGG" id="cim:CIMG_00674"/>
<dbReference type="VEuPathDB" id="FungiDB:CIMG_00674"/>
<dbReference type="InParanoid" id="Q1E9T9"/>
<dbReference type="OMA" id="AVHIKAD"/>
<dbReference type="OrthoDB" id="422663at2759"/>
<dbReference type="Proteomes" id="UP000001261">
    <property type="component" value="Unassembled WGS sequence"/>
</dbReference>
<dbReference type="GO" id="GO:0005730">
    <property type="term" value="C:nucleolus"/>
    <property type="evidence" value="ECO:0007669"/>
    <property type="project" value="UniProtKB-SubCell"/>
</dbReference>
<dbReference type="GO" id="GO:0005524">
    <property type="term" value="F:ATP binding"/>
    <property type="evidence" value="ECO:0007669"/>
    <property type="project" value="UniProtKB-KW"/>
</dbReference>
<dbReference type="GO" id="GO:0016887">
    <property type="term" value="F:ATP hydrolysis activity"/>
    <property type="evidence" value="ECO:0007669"/>
    <property type="project" value="RHEA"/>
</dbReference>
<dbReference type="GO" id="GO:0003723">
    <property type="term" value="F:RNA binding"/>
    <property type="evidence" value="ECO:0007669"/>
    <property type="project" value="UniProtKB-KW"/>
</dbReference>
<dbReference type="GO" id="GO:0003724">
    <property type="term" value="F:RNA helicase activity"/>
    <property type="evidence" value="ECO:0007669"/>
    <property type="project" value="UniProtKB-EC"/>
</dbReference>
<dbReference type="GO" id="GO:0006364">
    <property type="term" value="P:rRNA processing"/>
    <property type="evidence" value="ECO:0007669"/>
    <property type="project" value="UniProtKB-KW"/>
</dbReference>
<dbReference type="CDD" id="cd17949">
    <property type="entry name" value="DEADc_DDX31"/>
    <property type="match status" value="1"/>
</dbReference>
<dbReference type="CDD" id="cd18787">
    <property type="entry name" value="SF2_C_DEAD"/>
    <property type="match status" value="1"/>
</dbReference>
<dbReference type="Gene3D" id="3.40.50.300">
    <property type="entry name" value="P-loop containing nucleotide triphosphate hydrolases"/>
    <property type="match status" value="2"/>
</dbReference>
<dbReference type="InterPro" id="IPR011545">
    <property type="entry name" value="DEAD/DEAH_box_helicase_dom"/>
</dbReference>
<dbReference type="InterPro" id="IPR014001">
    <property type="entry name" value="Helicase_ATP-bd"/>
</dbReference>
<dbReference type="InterPro" id="IPR001650">
    <property type="entry name" value="Helicase_C-like"/>
</dbReference>
<dbReference type="InterPro" id="IPR027417">
    <property type="entry name" value="P-loop_NTPase"/>
</dbReference>
<dbReference type="InterPro" id="IPR014014">
    <property type="entry name" value="RNA_helicase_DEAD_Q_motif"/>
</dbReference>
<dbReference type="InterPro" id="IPR025313">
    <property type="entry name" value="SPB4-like_CTE"/>
</dbReference>
<dbReference type="PANTHER" id="PTHR24031">
    <property type="entry name" value="RNA HELICASE"/>
    <property type="match status" value="1"/>
</dbReference>
<dbReference type="Pfam" id="PF13959">
    <property type="entry name" value="CTE_SPB4"/>
    <property type="match status" value="1"/>
</dbReference>
<dbReference type="Pfam" id="PF00270">
    <property type="entry name" value="DEAD"/>
    <property type="match status" value="1"/>
</dbReference>
<dbReference type="Pfam" id="PF00271">
    <property type="entry name" value="Helicase_C"/>
    <property type="match status" value="1"/>
</dbReference>
<dbReference type="SMART" id="SM00487">
    <property type="entry name" value="DEXDc"/>
    <property type="match status" value="1"/>
</dbReference>
<dbReference type="SMART" id="SM01178">
    <property type="entry name" value="DUF4217"/>
    <property type="match status" value="1"/>
</dbReference>
<dbReference type="SMART" id="SM00490">
    <property type="entry name" value="HELICc"/>
    <property type="match status" value="1"/>
</dbReference>
<dbReference type="SUPFAM" id="SSF52540">
    <property type="entry name" value="P-loop containing nucleoside triphosphate hydrolases"/>
    <property type="match status" value="2"/>
</dbReference>
<dbReference type="PROSITE" id="PS51192">
    <property type="entry name" value="HELICASE_ATP_BIND_1"/>
    <property type="match status" value="1"/>
</dbReference>
<dbReference type="PROSITE" id="PS51194">
    <property type="entry name" value="HELICASE_CTER"/>
    <property type="match status" value="1"/>
</dbReference>
<dbReference type="PROSITE" id="PS51195">
    <property type="entry name" value="Q_MOTIF"/>
    <property type="match status" value="1"/>
</dbReference>
<proteinExistence type="inferred from homology"/>
<reference key="1">
    <citation type="journal article" date="2009" name="Genome Res.">
        <title>Comparative genomic analyses of the human fungal pathogens Coccidioides and their relatives.</title>
        <authorList>
            <person name="Sharpton T.J."/>
            <person name="Stajich J.E."/>
            <person name="Rounsley S.D."/>
            <person name="Gardner M.J."/>
            <person name="Wortman J.R."/>
            <person name="Jordar V.S."/>
            <person name="Maiti R."/>
            <person name="Kodira C.D."/>
            <person name="Neafsey D.E."/>
            <person name="Zeng Q."/>
            <person name="Hung C.-Y."/>
            <person name="McMahan C."/>
            <person name="Muszewska A."/>
            <person name="Grynberg M."/>
            <person name="Mandel M.A."/>
            <person name="Kellner E.M."/>
            <person name="Barker B.M."/>
            <person name="Galgiani J.N."/>
            <person name="Orbach M.J."/>
            <person name="Kirkland T.N."/>
            <person name="Cole G.T."/>
            <person name="Henn M.R."/>
            <person name="Birren B.W."/>
            <person name="Taylor J.W."/>
        </authorList>
    </citation>
    <scope>NUCLEOTIDE SEQUENCE [LARGE SCALE GENOMIC DNA]</scope>
    <source>
        <strain>RS</strain>
    </source>
</reference>
<reference key="2">
    <citation type="journal article" date="2010" name="Genome Res.">
        <title>Population genomic sequencing of Coccidioides fungi reveals recent hybridization and transposon control.</title>
        <authorList>
            <person name="Neafsey D.E."/>
            <person name="Barker B.M."/>
            <person name="Sharpton T.J."/>
            <person name="Stajich J.E."/>
            <person name="Park D.J."/>
            <person name="Whiston E."/>
            <person name="Hung C.-Y."/>
            <person name="McMahan C."/>
            <person name="White J."/>
            <person name="Sykes S."/>
            <person name="Heiman D."/>
            <person name="Young S."/>
            <person name="Zeng Q."/>
            <person name="Abouelleil A."/>
            <person name="Aftuck L."/>
            <person name="Bessette D."/>
            <person name="Brown A."/>
            <person name="FitzGerald M."/>
            <person name="Lui A."/>
            <person name="Macdonald J.P."/>
            <person name="Priest M."/>
            <person name="Orbach M.J."/>
            <person name="Galgiani J.N."/>
            <person name="Kirkland T.N."/>
            <person name="Cole G.T."/>
            <person name="Birren B.W."/>
            <person name="Henn M.R."/>
            <person name="Taylor J.W."/>
            <person name="Rounsley S.D."/>
        </authorList>
    </citation>
    <scope>GENOME REANNOTATION</scope>
    <source>
        <strain>RS</strain>
    </source>
</reference>
<feature type="chain" id="PRO_0000256025" description="ATP-dependent RNA helicase DBP7">
    <location>
        <begin position="1"/>
        <end position="769"/>
    </location>
</feature>
<feature type="domain" description="Helicase ATP-binding" evidence="2">
    <location>
        <begin position="188"/>
        <end position="389"/>
    </location>
</feature>
<feature type="domain" description="Helicase C-terminal" evidence="3">
    <location>
        <begin position="430"/>
        <end position="622"/>
    </location>
</feature>
<feature type="region of interest" description="Disordered" evidence="4">
    <location>
        <begin position="38"/>
        <end position="107"/>
    </location>
</feature>
<feature type="region of interest" description="Disordered" evidence="4">
    <location>
        <begin position="127"/>
        <end position="150"/>
    </location>
</feature>
<feature type="region of interest" description="Disordered" evidence="4">
    <location>
        <begin position="391"/>
        <end position="411"/>
    </location>
</feature>
<feature type="region of interest" description="Disordered" evidence="4">
    <location>
        <begin position="471"/>
        <end position="490"/>
    </location>
</feature>
<feature type="region of interest" description="Disordered" evidence="4">
    <location>
        <begin position="705"/>
        <end position="769"/>
    </location>
</feature>
<feature type="short sequence motif" description="Q motif">
    <location>
        <begin position="155"/>
        <end position="184"/>
    </location>
</feature>
<feature type="short sequence motif" description="DEAD box">
    <location>
        <begin position="325"/>
        <end position="328"/>
    </location>
</feature>
<feature type="compositionally biased region" description="Low complexity" evidence="4">
    <location>
        <begin position="55"/>
        <end position="68"/>
    </location>
</feature>
<feature type="compositionally biased region" description="Acidic residues" evidence="4">
    <location>
        <begin position="472"/>
        <end position="481"/>
    </location>
</feature>
<feature type="compositionally biased region" description="Basic and acidic residues" evidence="4">
    <location>
        <begin position="711"/>
        <end position="739"/>
    </location>
</feature>
<feature type="compositionally biased region" description="Basic and acidic residues" evidence="4">
    <location>
        <begin position="746"/>
        <end position="760"/>
    </location>
</feature>
<feature type="binding site" evidence="2">
    <location>
        <begin position="201"/>
        <end position="208"/>
    </location>
    <ligand>
        <name>ATP</name>
        <dbReference type="ChEBI" id="CHEBI:30616"/>
    </ligand>
</feature>
<name>DBP7_COCIM</name>
<sequence length="769" mass="84499">MAEDGMLLNFSLDDSVIKPQQRFKGGTWKDRLVAKKIAVKRQNKSRHSAETGAVNSNNPQNPNKINVPTGQRPAKRQRIDGGDFKPTTKSSAGGGGVGNDEQTDRKSYGDRQVISSLFTYNPTAKTVASTDGATHDEDTTEPAKPSNAPLVDGIDTFTSLGLSPSLATHLLTKLNLKTPTAIQKSSITQLLKEECDAFVQAQTGSGKTLAYLLPIVERLMRISSHNKGKKDSEGNTVHRDSGLFAIVLAPTRELCKQISVVLDGLLRCAHWIVAGTVIGGEKKKSEKARLRKGLNILVATPGRLADHLENTKVLDVSNVRWLVLDEGDRLMDLGFEEEIQGIIKKLDERRRPSKIPDLPAKRTTILCSATLKMNVQRLGEISLKEAIHIKADPADEDDEQKDGSKQPEFSAPAQLKQSYAVVAAKLRLVTLTALLKRTFARKGSVMKAIIFVSCADSVDFHFEVFTRRESSEELPDADDENAPSSSNVHGSIATASAFSNPSNNVILHKLHGSLPQHVRTATLSAFAKQKDASVLICTDVAARGLDLPNVDFVIEYDPAFCSDDHLHRIGRTARLGRDGRALIFLLPGNEEGYVDILKGSYREGSSNSVTRNEVNEILKRGFGGNSEAISKGWEDKATDWQLDIERWALEDSTILEMARRAYQSHIRAYATHIAAERHMFNIKDLHLGHLAKSFALRDRPAKINVPGLRPGNEDTKKSFKADRKLASGEKRKMSAREDSSSTTDAAEARKKMQQKLKEHMAGASEFNIA</sequence>